<protein>
    <recommendedName>
        <fullName evidence="1">Protein translocase subunit SecD</fullName>
    </recommendedName>
</protein>
<gene>
    <name evidence="1" type="primary">secD</name>
    <name type="ordered locus">MT2664</name>
</gene>
<evidence type="ECO:0000255" key="1">
    <source>
        <dbReference type="HAMAP-Rule" id="MF_01463"/>
    </source>
</evidence>
<evidence type="ECO:0000256" key="2">
    <source>
        <dbReference type="SAM" id="MobiDB-lite"/>
    </source>
</evidence>
<evidence type="ECO:0000305" key="3"/>
<comment type="function">
    <text evidence="1">Part of the Sec protein translocase complex. Interacts with the SecYEG preprotein conducting channel. SecDF uses the proton motive force (PMF) to complete protein translocation after the ATP-dependent function of SecA.</text>
</comment>
<comment type="subunit">
    <text evidence="1">Forms a complex with SecF. Part of the essential Sec protein translocation apparatus which comprises SecA, SecYEG and auxiliary proteins SecDF. Other proteins may also be involved.</text>
</comment>
<comment type="subcellular location">
    <subcellularLocation>
        <location evidence="1">Cell membrane</location>
        <topology evidence="1">Multi-pass membrane protein</topology>
    </subcellularLocation>
</comment>
<comment type="similarity">
    <text evidence="1">Belongs to the SecD/SecF family. SecD subfamily.</text>
</comment>
<comment type="sequence caution" evidence="3">
    <conflict type="erroneous initiation">
        <sequence resource="EMBL-CDS" id="AAK46977"/>
    </conflict>
    <text>Truncated N-terminus.</text>
</comment>
<reference key="1">
    <citation type="journal article" date="2002" name="J. Bacteriol.">
        <title>Whole-genome comparison of Mycobacterium tuberculosis clinical and laboratory strains.</title>
        <authorList>
            <person name="Fleischmann R.D."/>
            <person name="Alland D."/>
            <person name="Eisen J.A."/>
            <person name="Carpenter L."/>
            <person name="White O."/>
            <person name="Peterson J.D."/>
            <person name="DeBoy R.T."/>
            <person name="Dodson R.J."/>
            <person name="Gwinn M.L."/>
            <person name="Haft D.H."/>
            <person name="Hickey E.K."/>
            <person name="Kolonay J.F."/>
            <person name="Nelson W.C."/>
            <person name="Umayam L.A."/>
            <person name="Ermolaeva M.D."/>
            <person name="Salzberg S.L."/>
            <person name="Delcher A."/>
            <person name="Utterback T.R."/>
            <person name="Weidman J.F."/>
            <person name="Khouri H.M."/>
            <person name="Gill J."/>
            <person name="Mikula A."/>
            <person name="Bishai W."/>
            <person name="Jacobs W.R. Jr."/>
            <person name="Venter J.C."/>
            <person name="Fraser C.M."/>
        </authorList>
    </citation>
    <scope>NUCLEOTIDE SEQUENCE [LARGE SCALE GENOMIC DNA]</scope>
    <source>
        <strain>CDC 1551 / Oshkosh</strain>
    </source>
</reference>
<accession>P9WGP0</accession>
<accession>L0TCU8</accession>
<accession>Q50634</accession>
<proteinExistence type="inferred from homology"/>
<name>SECD_MYCTO</name>
<feature type="chain" id="PRO_0000428328" description="Protein translocase subunit SecD">
    <location>
        <begin position="1"/>
        <end position="573"/>
    </location>
</feature>
<feature type="transmembrane region" description="Helical" evidence="1">
    <location>
        <begin position="13"/>
        <end position="33"/>
    </location>
</feature>
<feature type="transmembrane region" description="Helical" evidence="1">
    <location>
        <begin position="385"/>
        <end position="405"/>
    </location>
</feature>
<feature type="transmembrane region" description="Helical" evidence="1">
    <location>
        <begin position="410"/>
        <end position="430"/>
    </location>
</feature>
<feature type="transmembrane region" description="Helical" evidence="1">
    <location>
        <begin position="441"/>
        <end position="461"/>
    </location>
</feature>
<feature type="transmembrane region" description="Helical" evidence="1">
    <location>
        <begin position="489"/>
        <end position="509"/>
    </location>
</feature>
<feature type="transmembrane region" description="Helical" evidence="1">
    <location>
        <begin position="514"/>
        <end position="534"/>
    </location>
</feature>
<feature type="region of interest" description="Disordered" evidence="2">
    <location>
        <begin position="127"/>
        <end position="200"/>
    </location>
</feature>
<feature type="compositionally biased region" description="Pro residues" evidence="2">
    <location>
        <begin position="135"/>
        <end position="154"/>
    </location>
</feature>
<feature type="compositionally biased region" description="Pro residues" evidence="2">
    <location>
        <begin position="161"/>
        <end position="194"/>
    </location>
</feature>
<keyword id="KW-1003">Cell membrane</keyword>
<keyword id="KW-0472">Membrane</keyword>
<keyword id="KW-0653">Protein transport</keyword>
<keyword id="KW-1185">Reference proteome</keyword>
<keyword id="KW-0811">Translocation</keyword>
<keyword id="KW-0812">Transmembrane</keyword>
<keyword id="KW-1133">Transmembrane helix</keyword>
<keyword id="KW-0813">Transport</keyword>
<sequence length="573" mass="60267">MASSSAPVHPARYLSVFLVMLIGIYLLVFFTGDKHTAPKLGIDLQGGTRVTLTARTPDGSAPSREALAQAQQIISARVNGLGVSGSEVVVDGDNLVITVPGNDGSEARNLGQTARLYIRPVLNSMPAQPAAEEPQPAPSAEPQPPGQPAAPPPAQSGAPASPQPGAQPRPYPQDPAPSPNPTSPASPPPAPPAEAPATDPRKDLAERIAQEKKLRQSTNQYMQMVALQFQATRCESDDILAGNDDPKLPLVTCSTDHKTAYLLAPSIISGDQIQNATSGMDQRGIGYVVDLQFKGPAANIWADYTAAHIGTQTAFTLDSQVVSAPQIQEAIPGGRTQISGGDPPFTAATARQLANVLKYGSLPLSFEPSEAQTVSATLGLSSLRAGMIAGAIGLLLVLVYSLLYYRVLGLLTALSLVASGSMVFAILVLLGRYINYTLDLAGIAGLIIGIGTTADSFVVFFERIKDEIREGRSFRSAVPRGWARARKTIVSGNAVTFLAAAVLYFLAIGQVKGFAFTLGLTTILDLVVVFLVTWPLVYLASKSSLLAKPAYNGLGAVQQVARERRAMARTGRG</sequence>
<dbReference type="EMBL" id="AE000516">
    <property type="protein sequence ID" value="AAK46977.1"/>
    <property type="status" value="ALT_INIT"/>
    <property type="molecule type" value="Genomic_DNA"/>
</dbReference>
<dbReference type="PIR" id="B70726">
    <property type="entry name" value="B70726"/>
</dbReference>
<dbReference type="RefSeq" id="WP_003413385.1">
    <property type="nucleotide sequence ID" value="NZ_KK341227.1"/>
</dbReference>
<dbReference type="SMR" id="P9WGP0"/>
<dbReference type="GeneID" id="45426589"/>
<dbReference type="KEGG" id="mtc:MT2664"/>
<dbReference type="PATRIC" id="fig|83331.31.peg.2871"/>
<dbReference type="HOGENOM" id="CLU_007894_4_2_11"/>
<dbReference type="Proteomes" id="UP000001020">
    <property type="component" value="Chromosome"/>
</dbReference>
<dbReference type="GO" id="GO:0005886">
    <property type="term" value="C:plasma membrane"/>
    <property type="evidence" value="ECO:0007669"/>
    <property type="project" value="UniProtKB-SubCell"/>
</dbReference>
<dbReference type="GO" id="GO:0015450">
    <property type="term" value="F:protein-transporting ATPase activity"/>
    <property type="evidence" value="ECO:0007669"/>
    <property type="project" value="InterPro"/>
</dbReference>
<dbReference type="GO" id="GO:0065002">
    <property type="term" value="P:intracellular protein transmembrane transport"/>
    <property type="evidence" value="ECO:0007669"/>
    <property type="project" value="UniProtKB-UniRule"/>
</dbReference>
<dbReference type="GO" id="GO:0006605">
    <property type="term" value="P:protein targeting"/>
    <property type="evidence" value="ECO:0007669"/>
    <property type="project" value="UniProtKB-UniRule"/>
</dbReference>
<dbReference type="GO" id="GO:0043952">
    <property type="term" value="P:protein transport by the Sec complex"/>
    <property type="evidence" value="ECO:0007669"/>
    <property type="project" value="UniProtKB-UniRule"/>
</dbReference>
<dbReference type="FunFam" id="1.20.1640.10:FF:000014">
    <property type="entry name" value="Protein translocase subunit SecD"/>
    <property type="match status" value="1"/>
</dbReference>
<dbReference type="FunFam" id="3.30.1360.200:FF:000005">
    <property type="entry name" value="Protein translocase subunit SecD"/>
    <property type="match status" value="1"/>
</dbReference>
<dbReference type="FunFam" id="3.30.70.3220:FF:000002">
    <property type="entry name" value="Protein translocase subunit SecD"/>
    <property type="match status" value="1"/>
</dbReference>
<dbReference type="Gene3D" id="3.30.1360.200">
    <property type="match status" value="1"/>
</dbReference>
<dbReference type="Gene3D" id="3.30.70.3220">
    <property type="match status" value="1"/>
</dbReference>
<dbReference type="Gene3D" id="1.20.1640.10">
    <property type="entry name" value="Multidrug efflux transporter AcrB transmembrane domain"/>
    <property type="match status" value="1"/>
</dbReference>
<dbReference type="HAMAP" id="MF_01463_B">
    <property type="entry name" value="SecD_B"/>
    <property type="match status" value="1"/>
</dbReference>
<dbReference type="InterPro" id="IPR005791">
    <property type="entry name" value="SecD"/>
</dbReference>
<dbReference type="InterPro" id="IPR022813">
    <property type="entry name" value="SecD/SecF_arch_bac"/>
</dbReference>
<dbReference type="InterPro" id="IPR022646">
    <property type="entry name" value="SecD/SecF_CS"/>
</dbReference>
<dbReference type="InterPro" id="IPR048634">
    <property type="entry name" value="SecD_SecF_C"/>
</dbReference>
<dbReference type="InterPro" id="IPR055344">
    <property type="entry name" value="SecD_SecF_C_bact"/>
</dbReference>
<dbReference type="InterPro" id="IPR054384">
    <property type="entry name" value="SecDF_P1_head"/>
</dbReference>
<dbReference type="NCBIfam" id="TIGR00916">
    <property type="entry name" value="2A0604s01"/>
    <property type="match status" value="1"/>
</dbReference>
<dbReference type="NCBIfam" id="TIGR01129">
    <property type="entry name" value="secD"/>
    <property type="match status" value="1"/>
</dbReference>
<dbReference type="PANTHER" id="PTHR30081:SF1">
    <property type="entry name" value="PROTEIN TRANSLOCASE SUBUNIT SECD"/>
    <property type="match status" value="1"/>
</dbReference>
<dbReference type="PANTHER" id="PTHR30081">
    <property type="entry name" value="PROTEIN-EXPORT MEMBRANE PROTEIN SEC"/>
    <property type="match status" value="1"/>
</dbReference>
<dbReference type="Pfam" id="PF07549">
    <property type="entry name" value="Sec_GG"/>
    <property type="match status" value="1"/>
</dbReference>
<dbReference type="Pfam" id="PF02355">
    <property type="entry name" value="SecD_SecF_C"/>
    <property type="match status" value="1"/>
</dbReference>
<dbReference type="Pfam" id="PF22599">
    <property type="entry name" value="SecDF_P1_head"/>
    <property type="match status" value="1"/>
</dbReference>
<dbReference type="SUPFAM" id="SSF82866">
    <property type="entry name" value="Multidrug efflux transporter AcrB transmembrane domain"/>
    <property type="match status" value="1"/>
</dbReference>
<organism>
    <name type="scientific">Mycobacterium tuberculosis (strain CDC 1551 / Oshkosh)</name>
    <dbReference type="NCBI Taxonomy" id="83331"/>
    <lineage>
        <taxon>Bacteria</taxon>
        <taxon>Bacillati</taxon>
        <taxon>Actinomycetota</taxon>
        <taxon>Actinomycetes</taxon>
        <taxon>Mycobacteriales</taxon>
        <taxon>Mycobacteriaceae</taxon>
        <taxon>Mycobacterium</taxon>
        <taxon>Mycobacterium tuberculosis complex</taxon>
    </lineage>
</organism>